<protein>
    <recommendedName>
        <fullName evidence="1">NH(3)-dependent NAD(+) synthetase</fullName>
        <ecNumber evidence="1">6.3.1.5</ecNumber>
    </recommendedName>
</protein>
<keyword id="KW-0067">ATP-binding</keyword>
<keyword id="KW-0436">Ligase</keyword>
<keyword id="KW-0460">Magnesium</keyword>
<keyword id="KW-0479">Metal-binding</keyword>
<keyword id="KW-0520">NAD</keyword>
<keyword id="KW-0547">Nucleotide-binding</keyword>
<reference key="1">
    <citation type="journal article" date="2007" name="PLoS ONE">
        <title>A glimpse of streptococcal toxic shock syndrome from comparative genomics of S. suis 2 Chinese isolates.</title>
        <authorList>
            <person name="Chen C."/>
            <person name="Tang J."/>
            <person name="Dong W."/>
            <person name="Wang C."/>
            <person name="Feng Y."/>
            <person name="Wang J."/>
            <person name="Zheng F."/>
            <person name="Pan X."/>
            <person name="Liu D."/>
            <person name="Li M."/>
            <person name="Song Y."/>
            <person name="Zhu X."/>
            <person name="Sun H."/>
            <person name="Feng T."/>
            <person name="Guo Z."/>
            <person name="Ju A."/>
            <person name="Ge J."/>
            <person name="Dong Y."/>
            <person name="Sun W."/>
            <person name="Jiang Y."/>
            <person name="Wang J."/>
            <person name="Yan J."/>
            <person name="Yang H."/>
            <person name="Wang X."/>
            <person name="Gao G.F."/>
            <person name="Yang R."/>
            <person name="Wang J."/>
            <person name="Yu J."/>
        </authorList>
    </citation>
    <scope>NUCLEOTIDE SEQUENCE [LARGE SCALE GENOMIC DNA]</scope>
    <source>
        <strain>05ZYH33</strain>
    </source>
</reference>
<comment type="function">
    <text evidence="1">Catalyzes the ATP-dependent amidation of deamido-NAD to form NAD. Uses ammonia as a nitrogen source.</text>
</comment>
<comment type="catalytic activity">
    <reaction evidence="1">
        <text>deamido-NAD(+) + NH4(+) + ATP = AMP + diphosphate + NAD(+) + H(+)</text>
        <dbReference type="Rhea" id="RHEA:21188"/>
        <dbReference type="ChEBI" id="CHEBI:15378"/>
        <dbReference type="ChEBI" id="CHEBI:28938"/>
        <dbReference type="ChEBI" id="CHEBI:30616"/>
        <dbReference type="ChEBI" id="CHEBI:33019"/>
        <dbReference type="ChEBI" id="CHEBI:57540"/>
        <dbReference type="ChEBI" id="CHEBI:58437"/>
        <dbReference type="ChEBI" id="CHEBI:456215"/>
        <dbReference type="EC" id="6.3.1.5"/>
    </reaction>
</comment>
<comment type="pathway">
    <text evidence="1">Cofactor biosynthesis; NAD(+) biosynthesis; NAD(+) from deamido-NAD(+) (ammonia route): step 1/1.</text>
</comment>
<comment type="subunit">
    <text evidence="1">Homodimer.</text>
</comment>
<comment type="similarity">
    <text evidence="1">Belongs to the NAD synthetase family.</text>
</comment>
<accession>A4VX00</accession>
<name>NADE_STRSY</name>
<organism>
    <name type="scientific">Streptococcus suis (strain 05ZYH33)</name>
    <dbReference type="NCBI Taxonomy" id="391295"/>
    <lineage>
        <taxon>Bacteria</taxon>
        <taxon>Bacillati</taxon>
        <taxon>Bacillota</taxon>
        <taxon>Bacilli</taxon>
        <taxon>Lactobacillales</taxon>
        <taxon>Streptococcaceae</taxon>
        <taxon>Streptococcus</taxon>
    </lineage>
</organism>
<dbReference type="EC" id="6.3.1.5" evidence="1"/>
<dbReference type="EMBL" id="CP000407">
    <property type="protein sequence ID" value="ABP90639.1"/>
    <property type="molecule type" value="Genomic_DNA"/>
</dbReference>
<dbReference type="SMR" id="A4VX00"/>
<dbReference type="STRING" id="391295.SSU05_1673"/>
<dbReference type="KEGG" id="ssu:SSU05_1673"/>
<dbReference type="eggNOG" id="COG0171">
    <property type="taxonomic scope" value="Bacteria"/>
</dbReference>
<dbReference type="HOGENOM" id="CLU_059327_3_0_9"/>
<dbReference type="UniPathway" id="UPA00253">
    <property type="reaction ID" value="UER00333"/>
</dbReference>
<dbReference type="GO" id="GO:0005737">
    <property type="term" value="C:cytoplasm"/>
    <property type="evidence" value="ECO:0007669"/>
    <property type="project" value="InterPro"/>
</dbReference>
<dbReference type="GO" id="GO:0005524">
    <property type="term" value="F:ATP binding"/>
    <property type="evidence" value="ECO:0007669"/>
    <property type="project" value="UniProtKB-UniRule"/>
</dbReference>
<dbReference type="GO" id="GO:0004359">
    <property type="term" value="F:glutaminase activity"/>
    <property type="evidence" value="ECO:0007669"/>
    <property type="project" value="InterPro"/>
</dbReference>
<dbReference type="GO" id="GO:0046872">
    <property type="term" value="F:metal ion binding"/>
    <property type="evidence" value="ECO:0007669"/>
    <property type="project" value="UniProtKB-KW"/>
</dbReference>
<dbReference type="GO" id="GO:0003952">
    <property type="term" value="F:NAD+ synthase (glutamine-hydrolyzing) activity"/>
    <property type="evidence" value="ECO:0007669"/>
    <property type="project" value="InterPro"/>
</dbReference>
<dbReference type="GO" id="GO:0008795">
    <property type="term" value="F:NAD+ synthase activity"/>
    <property type="evidence" value="ECO:0007669"/>
    <property type="project" value="UniProtKB-UniRule"/>
</dbReference>
<dbReference type="GO" id="GO:0009435">
    <property type="term" value="P:NAD biosynthetic process"/>
    <property type="evidence" value="ECO:0007669"/>
    <property type="project" value="UniProtKB-UniRule"/>
</dbReference>
<dbReference type="CDD" id="cd00553">
    <property type="entry name" value="NAD_synthase"/>
    <property type="match status" value="1"/>
</dbReference>
<dbReference type="FunFam" id="3.40.50.620:FF:000015">
    <property type="entry name" value="NH(3)-dependent NAD(+) synthetase"/>
    <property type="match status" value="1"/>
</dbReference>
<dbReference type="Gene3D" id="3.40.50.620">
    <property type="entry name" value="HUPs"/>
    <property type="match status" value="1"/>
</dbReference>
<dbReference type="HAMAP" id="MF_00193">
    <property type="entry name" value="NadE_ammonia_dep"/>
    <property type="match status" value="1"/>
</dbReference>
<dbReference type="InterPro" id="IPR022310">
    <property type="entry name" value="NAD/GMP_synthase"/>
</dbReference>
<dbReference type="InterPro" id="IPR003694">
    <property type="entry name" value="NAD_synthase"/>
</dbReference>
<dbReference type="InterPro" id="IPR022926">
    <property type="entry name" value="NH(3)-dep_NAD(+)_synth"/>
</dbReference>
<dbReference type="InterPro" id="IPR014729">
    <property type="entry name" value="Rossmann-like_a/b/a_fold"/>
</dbReference>
<dbReference type="NCBIfam" id="TIGR00552">
    <property type="entry name" value="nadE"/>
    <property type="match status" value="1"/>
</dbReference>
<dbReference type="NCBIfam" id="NF001979">
    <property type="entry name" value="PRK00768.1"/>
    <property type="match status" value="1"/>
</dbReference>
<dbReference type="PANTHER" id="PTHR23090">
    <property type="entry name" value="NH 3 /GLUTAMINE-DEPENDENT NAD + SYNTHETASE"/>
    <property type="match status" value="1"/>
</dbReference>
<dbReference type="PANTHER" id="PTHR23090:SF7">
    <property type="entry name" value="NH(3)-DEPENDENT NAD(+) SYNTHETASE"/>
    <property type="match status" value="1"/>
</dbReference>
<dbReference type="Pfam" id="PF02540">
    <property type="entry name" value="NAD_synthase"/>
    <property type="match status" value="1"/>
</dbReference>
<dbReference type="SUPFAM" id="SSF52402">
    <property type="entry name" value="Adenine nucleotide alpha hydrolases-like"/>
    <property type="match status" value="1"/>
</dbReference>
<proteinExistence type="inferred from homology"/>
<feature type="chain" id="PRO_1000077630" description="NH(3)-dependent NAD(+) synthetase">
    <location>
        <begin position="1"/>
        <end position="274"/>
    </location>
</feature>
<feature type="binding site" evidence="1">
    <location>
        <begin position="46"/>
        <end position="53"/>
    </location>
    <ligand>
        <name>ATP</name>
        <dbReference type="ChEBI" id="CHEBI:30616"/>
    </ligand>
</feature>
<feature type="binding site" evidence="1">
    <location>
        <position position="52"/>
    </location>
    <ligand>
        <name>Mg(2+)</name>
        <dbReference type="ChEBI" id="CHEBI:18420"/>
    </ligand>
</feature>
<feature type="binding site" evidence="1">
    <location>
        <position position="140"/>
    </location>
    <ligand>
        <name>deamido-NAD(+)</name>
        <dbReference type="ChEBI" id="CHEBI:58437"/>
    </ligand>
</feature>
<feature type="binding site" evidence="1">
    <location>
        <position position="160"/>
    </location>
    <ligand>
        <name>ATP</name>
        <dbReference type="ChEBI" id="CHEBI:30616"/>
    </ligand>
</feature>
<feature type="binding site" evidence="1">
    <location>
        <position position="165"/>
    </location>
    <ligand>
        <name>Mg(2+)</name>
        <dbReference type="ChEBI" id="CHEBI:18420"/>
    </ligand>
</feature>
<feature type="binding site" evidence="1">
    <location>
        <position position="173"/>
    </location>
    <ligand>
        <name>deamido-NAD(+)</name>
        <dbReference type="ChEBI" id="CHEBI:58437"/>
    </ligand>
</feature>
<feature type="binding site" evidence="1">
    <location>
        <position position="180"/>
    </location>
    <ligand>
        <name>deamido-NAD(+)</name>
        <dbReference type="ChEBI" id="CHEBI:58437"/>
    </ligand>
</feature>
<feature type="binding site" evidence="1">
    <location>
        <position position="189"/>
    </location>
    <ligand>
        <name>ATP</name>
        <dbReference type="ChEBI" id="CHEBI:30616"/>
    </ligand>
</feature>
<feature type="binding site" evidence="1">
    <location>
        <position position="211"/>
    </location>
    <ligand>
        <name>ATP</name>
        <dbReference type="ChEBI" id="CHEBI:30616"/>
    </ligand>
</feature>
<feature type="binding site" evidence="1">
    <location>
        <begin position="260"/>
        <end position="261"/>
    </location>
    <ligand>
        <name>deamido-NAD(+)</name>
        <dbReference type="ChEBI" id="CHEBI:58437"/>
    </ligand>
</feature>
<gene>
    <name evidence="1" type="primary">nadE</name>
    <name type="ordered locus">SSU05_1673</name>
</gene>
<evidence type="ECO:0000255" key="1">
    <source>
        <dbReference type="HAMAP-Rule" id="MF_00193"/>
    </source>
</evidence>
<sequence length="274" mass="30273">MTLQETIIKELGVKPSIDPKEEIRRSIDFLKDYLKKHPFLKTYVLGISGGQDSTLAGRLAQLTMEEMRAETGDDSYQFIAIRLPYGVQADESDAQAALAFIQPDVSLTINIKESTDAMVAAVNANGLAMSDFNKGNAKARMRMIAQYAIAGERKGAVIGTDHAAENITGFFTKHGDGGADILPLFRLNKRQGKQLLAALGADEKLYLKVPTADLEEDKPGLADEVALGVTYNQIDDYLEGKTIDPQSQTIIEGWWNKTAHKRHLPITIFDDFWK</sequence>